<keyword id="KW-0025">Alternative splicing</keyword>
<keyword id="KW-0053">Apoptosis</keyword>
<keyword id="KW-0130">Cell adhesion</keyword>
<keyword id="KW-1003">Cell membrane</keyword>
<keyword id="KW-0966">Cell projection</keyword>
<keyword id="KW-0256">Endoplasmic reticulum</keyword>
<keyword id="KW-0967">Endosome</keyword>
<keyword id="KW-0333">Golgi apparatus</keyword>
<keyword id="KW-0378">Hydrolase</keyword>
<keyword id="KW-0472">Membrane</keyword>
<keyword id="KW-0914">Notch signaling pathway</keyword>
<keyword id="KW-0597">Phosphoprotein</keyword>
<keyword id="KW-0645">Protease</keyword>
<keyword id="KW-1185">Reference proteome</keyword>
<keyword id="KW-0770">Synapse</keyword>
<keyword id="KW-0812">Transmembrane</keyword>
<keyword id="KW-1133">Transmembrane helix</keyword>
<feature type="chain" id="PRO_0000025593" description="Presenilin-1 NTF subunit" evidence="1">
    <location>
        <begin position="1"/>
        <end position="298"/>
    </location>
</feature>
<feature type="chain" id="PRO_0000025594" description="Presenilin-1 CTF subunit" evidence="1">
    <location>
        <begin position="299"/>
        <end position="467"/>
    </location>
</feature>
<feature type="chain" id="PRO_0000236057" description="Presenilin-1 CTF12" evidence="1">
    <location>
        <begin position="346"/>
        <end position="467"/>
    </location>
</feature>
<feature type="topological domain" description="Cytoplasmic" evidence="2">
    <location>
        <begin position="1"/>
        <end position="82"/>
    </location>
</feature>
<feature type="transmembrane region" description="Helical" evidence="2">
    <location>
        <begin position="83"/>
        <end position="103"/>
    </location>
</feature>
<feature type="topological domain" description="Lumenal" evidence="2">
    <location>
        <begin position="104"/>
        <end position="132"/>
    </location>
</feature>
<feature type="transmembrane region" description="Helical" evidence="2">
    <location>
        <begin position="133"/>
        <end position="153"/>
    </location>
</feature>
<feature type="topological domain" description="Cytoplasmic" evidence="2">
    <location>
        <begin position="154"/>
        <end position="166"/>
    </location>
</feature>
<feature type="transmembrane region" description="Helical" evidence="2">
    <location>
        <begin position="167"/>
        <end position="189"/>
    </location>
</feature>
<feature type="topological domain" description="Lumenal" evidence="2">
    <location>
        <begin position="190"/>
        <end position="194"/>
    </location>
</feature>
<feature type="transmembrane region" description="Helical" evidence="2">
    <location>
        <begin position="195"/>
        <end position="216"/>
    </location>
</feature>
<feature type="topological domain" description="Cytoplasmic" evidence="2">
    <location>
        <begin position="217"/>
        <end position="220"/>
    </location>
</feature>
<feature type="transmembrane region" description="Helical" evidence="2">
    <location>
        <begin position="221"/>
        <end position="241"/>
    </location>
</feature>
<feature type="topological domain" description="Lumenal" evidence="2">
    <location>
        <begin position="242"/>
        <end position="248"/>
    </location>
</feature>
<feature type="transmembrane region" description="Helical" evidence="2">
    <location>
        <begin position="249"/>
        <end position="272"/>
    </location>
</feature>
<feature type="topological domain" description="Cytoplasmic" evidence="2">
    <location>
        <begin position="273"/>
        <end position="380"/>
    </location>
</feature>
<feature type="transmembrane region" description="Helical" evidence="2">
    <location>
        <begin position="381"/>
        <end position="401"/>
    </location>
</feature>
<feature type="topological domain" description="Lumenal" evidence="2">
    <location>
        <begin position="402"/>
        <end position="407"/>
    </location>
</feature>
<feature type="transmembrane region" description="Helical" evidence="2">
    <location>
        <begin position="408"/>
        <end position="428"/>
    </location>
</feature>
<feature type="topological domain" description="Cytoplasmic" evidence="2">
    <location>
        <begin position="429"/>
        <end position="432"/>
    </location>
</feature>
<feature type="transmembrane region" description="Helical" evidence="2">
    <location>
        <begin position="433"/>
        <end position="453"/>
    </location>
</feature>
<feature type="topological domain" description="Lumenal" evidence="2">
    <location>
        <begin position="454"/>
        <end position="467"/>
    </location>
</feature>
<feature type="region of interest" description="Disordered" evidence="6">
    <location>
        <begin position="1"/>
        <end position="69"/>
    </location>
</feature>
<feature type="region of interest" description="Important for cleavage of target proteins" evidence="2">
    <location>
        <begin position="288"/>
        <end position="290"/>
    </location>
</feature>
<feature type="region of interest" description="Disordered" evidence="6">
    <location>
        <begin position="305"/>
        <end position="354"/>
    </location>
</feature>
<feature type="region of interest" description="Required for interaction with CTNNB1" evidence="2">
    <location>
        <begin position="322"/>
        <end position="450"/>
    </location>
</feature>
<feature type="region of interest" description="Required for interaction with CTNND2" evidence="2">
    <location>
        <begin position="372"/>
        <end position="399"/>
    </location>
</feature>
<feature type="region of interest" description="Important for cleavage of target proteins" evidence="2">
    <location>
        <begin position="377"/>
        <end position="381"/>
    </location>
</feature>
<feature type="region of interest" description="Important for cleavage of target proteins" evidence="2">
    <location>
        <begin position="432"/>
        <end position="434"/>
    </location>
</feature>
<feature type="region of interest" description="Interaction with MTCH1" evidence="2">
    <location>
        <begin position="464"/>
        <end position="467"/>
    </location>
</feature>
<feature type="short sequence motif" description="PAL" evidence="9">
    <location>
        <begin position="433"/>
        <end position="435"/>
    </location>
</feature>
<feature type="compositionally biased region" description="Polar residues" evidence="6">
    <location>
        <begin position="10"/>
        <end position="29"/>
    </location>
</feature>
<feature type="compositionally biased region" description="Basic and acidic residues" evidence="6">
    <location>
        <begin position="30"/>
        <end position="45"/>
    </location>
</feature>
<feature type="compositionally biased region" description="Acidic residues" evidence="6">
    <location>
        <begin position="330"/>
        <end position="340"/>
    </location>
</feature>
<feature type="active site" evidence="2">
    <location>
        <position position="257"/>
    </location>
</feature>
<feature type="active site" evidence="2">
    <location>
        <position position="385"/>
    </location>
</feature>
<feature type="site" description="Cleavage; alternate" evidence="2">
    <location>
        <begin position="291"/>
        <end position="292"/>
    </location>
</feature>
<feature type="site" description="Cleavage; alternate" evidence="2">
    <location>
        <begin position="292"/>
        <end position="293"/>
    </location>
</feature>
<feature type="site" description="Cleavage" evidence="2">
    <location>
        <begin position="298"/>
        <end position="299"/>
    </location>
</feature>
<feature type="site" description="Cleavage; by caspase" evidence="2">
    <location>
        <begin position="345"/>
        <end position="346"/>
    </location>
</feature>
<feature type="modified residue" description="Phosphoserine" evidence="4">
    <location>
        <position position="51"/>
    </location>
</feature>
<feature type="modified residue" description="Phosphoserine; by PKA" evidence="2">
    <location>
        <position position="310"/>
    </location>
</feature>
<feature type="modified residue" description="Phosphoserine; by PKC" evidence="2">
    <location>
        <position position="346"/>
    </location>
</feature>
<feature type="modified residue" description="Phosphoserine" evidence="2">
    <location>
        <position position="367"/>
    </location>
</feature>
<feature type="modified residue" description="Phosphoserine" evidence="3">
    <location>
        <position position="371"/>
    </location>
</feature>
<feature type="splice variant" id="VSP_005193" description="In isoform I-463." evidence="8">
    <location>
        <begin position="26"/>
        <end position="29"/>
    </location>
</feature>
<reference key="1">
    <citation type="journal article" date="1996" name="Biochem. Biophys. Res. Commun.">
        <title>Molecular cloning, sequencing, and brain expression of the presenilin 1 gene in Microcebus murinus.</title>
        <authorList>
            <person name="Calenda A."/>
            <person name="Mestre-Frances N."/>
            <person name="Czech C."/>
            <person name="Pradier L."/>
            <person name="Bons N."/>
            <person name="Bellis M."/>
        </authorList>
    </citation>
    <scope>NUCLEOTIDE SEQUENCE [MRNA] (ISOFORMS I-463 AND I-467)</scope>
    <scope>TISSUE SPECIFICITY</scope>
    <source>
        <tissue>Brain</tissue>
    </source>
</reference>
<accession>P79802</accession>
<name>PSN1_MICMU</name>
<evidence type="ECO:0000250" key="1"/>
<evidence type="ECO:0000250" key="2">
    <source>
        <dbReference type="UniProtKB" id="P49768"/>
    </source>
</evidence>
<evidence type="ECO:0000250" key="3">
    <source>
        <dbReference type="UniProtKB" id="P49769"/>
    </source>
</evidence>
<evidence type="ECO:0000250" key="4">
    <source>
        <dbReference type="UniProtKB" id="P97887"/>
    </source>
</evidence>
<evidence type="ECO:0000250" key="5">
    <source>
        <dbReference type="UniProtKB" id="Q4JIM4"/>
    </source>
</evidence>
<evidence type="ECO:0000256" key="6">
    <source>
        <dbReference type="SAM" id="MobiDB-lite"/>
    </source>
</evidence>
<evidence type="ECO:0000269" key="7">
    <source>
    </source>
</evidence>
<evidence type="ECO:0000303" key="8">
    <source>
    </source>
</evidence>
<evidence type="ECO:0000305" key="9"/>
<gene>
    <name type="primary">PSEN1</name>
    <name type="synonym">PS1</name>
    <name type="synonym">PSNL1</name>
</gene>
<sequence>MTELPAPLSYFQNAQMSEDNHLSNTVRSQNDNREQQDHGDRRRLGNPEPLSNGRPQGNSGPVVERDEEEDEELTLKYGAKHVIMLFVPVTLCMVVVVATIKSVSFYTRKDGQLIYTPFTEDTETVGQRALHSVLNAAIMISVIVVMTILLVVLYKYRCYKVIHAWLIISSLLLLFFFSFIYLGEVFKTYNVAVDYITVALLIWNFGVVGMISIHWKGPLRLQQAYLIMISALMALVFIKYLPEWTAWLILAVISVYDLVAVLCPKGPLRMLVETAQERNETLFPALIYSSTMVWLVNMAEGDPEAQRRVSKNTKYNAQGTEREAQASVPENDDGGFSEEWEAQRDSQLGPHRSTSVSRAAVQEISSSIPASEDPEERGVKLGLGDFVFYSVLVGKASATASGDWNTTIACFVAILIGLCLTLLLLAIFKKALPALPISITFGLVFYFATDYLVQPFMDQLAFHQFYI</sequence>
<comment type="function">
    <text evidence="2 3">Catalytic subunit of the gamma-secretase complex, an endoprotease complex that catalyzes the intramembrane cleavage of integral membrane proteins such as Notch receptors and APP (amyloid-beta precursor protein). Requires the presence of the other members of the gamma-secretase complex for protease activity. Plays a role in Notch and Wnt signaling cascades and regulation of downstream processes via its role in processing key regulatory proteins, and by regulating cytosolic CTNNB1 levels. Stimulates cell-cell adhesion via its interaction with CDH1; this stabilizes the complexes between CDH1 (E-cadherin) and its interaction partners CTNNB1 (beta-catenin), CTNND1 and JUP (gamma-catenin). Under conditions of apoptosis or calcium influx, cleaves CDH1. This promotes the disassembly of the complexes between CDH1 and CTNND1, JUP and CTNNB1, increases the pool of cytoplasmic CTNNB1, and thereby negatively regulates Wnt signaling (By similarity). Required for normal embryonic brain and skeleton development, and for normal angiogenesis (By similarity). Mediates the proteolytic cleavage of EphB2/CTF1 into EphB2/CTF2 (By similarity). The holoprotein functions as a calcium-leak channel that allows the passive movement of calcium from endoplasmic reticulum to cytosol and is therefore involved in calcium homeostasis. Involved in the regulation of neurite outgrowth (By similarity). Is a regulator of presynaptic facilitation, spike transmission and synaptic vesicles replenishment in a process that depends on gamma-secretase activity. It acts through the control of SYT7 presynaptic expression (By similarity).</text>
</comment>
<comment type="subunit">
    <text evidence="2 3">Homodimer. The functional gamma-secretase complex is composed of at least four polypeptides: a presenilin homodimer (PSEN1 or PSEN2), nicastrin (NCSTN), APH1 (APH1A or APH1B) and PEN2. Such minimal complex is sufficient for secretase activity. Other components which are associated with the complex include SLC25A64, SLC5A7 and PHB. As part of the gamma-secretase complex, interacts with CRB2 (via transmembrane domain) (By similarity). Predominantly heterodimer of a N-terminal (NTF) and a C-terminal (CTF) endoproteolytical fragment. Associates with proteolytic processed C-terminal fragments C83 and C99 of the amyloid precursor protein (APP). Associates with NOTCH1. Associates with cadherin/catenin adhesion complexes through direct binding to CDH1 or CDH2. Interaction with CDH1 stabilizes the complex and stimulates cell-cell aggregation. Interaction with CDH2 is essential for trafficking of CDH2 from the endoplasmic reticulum to the plasma membrane. Interacts with CTNND2, CTNNB1, CTNND1, JUP, HERPUD1, FLNA, FLNB, MTCH1, PKP4 and PARL. Interacts through its N-terminus with GFAP (By similarity). Interacts with DOCK3 (By similarity). Interacts with UBQLN1 (By similarity).</text>
</comment>
<comment type="subcellular location">
    <subcellularLocation>
        <location evidence="2">Endoplasmic reticulum</location>
    </subcellularLocation>
    <subcellularLocation>
        <location evidence="2">Endoplasmic reticulum membrane</location>
        <topology evidence="2">Multi-pass membrane protein</topology>
    </subcellularLocation>
    <subcellularLocation>
        <location evidence="2">Golgi apparatus membrane</location>
        <topology evidence="2">Multi-pass membrane protein</topology>
    </subcellularLocation>
    <subcellularLocation>
        <location evidence="2">Cytoplasmic granule</location>
    </subcellularLocation>
    <subcellularLocation>
        <location evidence="2">Cell membrane</location>
        <topology evidence="2">Multi-pass membrane protein</topology>
    </subcellularLocation>
    <subcellularLocation>
        <location evidence="2">Cell projection</location>
        <location evidence="2">Growth cone</location>
    </subcellularLocation>
    <subcellularLocation>
        <location evidence="2">Early endosome</location>
    </subcellularLocation>
    <subcellularLocation>
        <location evidence="2">Early endosome membrane</location>
        <topology evidence="2">Multi-pass membrane protein</topology>
    </subcellularLocation>
    <subcellularLocation>
        <location evidence="2">Cell projection</location>
        <location evidence="2">Neuron projection</location>
    </subcellularLocation>
    <subcellularLocation>
        <location evidence="5">Cell projection</location>
        <location evidence="5">Axon</location>
    </subcellularLocation>
    <subcellularLocation>
        <location evidence="5">Synapse</location>
    </subcellularLocation>
    <text evidence="2">Translocates with bound NOTCH1 from the endoplasmic reticulum and/or Golgi to the cell surface. Colocalizes with CDH1/2 at sites of cell-cell contact. Colocalizes with CTNNB1 in the endoplasmic reticulum and the proximity of the plasma membrane. Also present in azurophil granules of neutrophils. Colocalizes with UBQLN1 in the cell membrane and in cytoplasmic juxtanuclear structures called aggresomes.</text>
</comment>
<comment type="alternative products">
    <event type="alternative splicing"/>
    <isoform>
        <id>P79802-1</id>
        <name>I-467</name>
        <sequence type="displayed"/>
    </isoform>
    <isoform>
        <id>P79802-2</id>
        <name>I-463</name>
        <sequence type="described" ref="VSP_005193"/>
    </isoform>
</comment>
<comment type="tissue specificity">
    <text evidence="7">Found predominantly in neurons of the different cortical layers and hippocampus but also in subcortical structures.</text>
</comment>
<comment type="domain">
    <text evidence="2">The PAL motif is required for normal active site conformation.</text>
</comment>
<comment type="domain">
    <text evidence="2">Substrates, such as NOTCH1 and APP peptides, are bound between PSEN1 transmembrane domains and via the first lumenal loop and the cytoplasmic loop between the sixth and seventh transmembrane domains. Substrate binding causes a conformation change and formation of an intermolecular antiparallel beta-sheet between PSEN1 and its substrates.</text>
</comment>
<comment type="PTM">
    <text evidence="2">Heterogeneous proteolytic processing generates N-terminal (NTF) and C-terminal (CTF) fragments of approximately 35 and 20 kDa, respectively. During apoptosis, the C-terminal fragment (CTF) is further cleaved by caspase-3 to produce the fragment, PS1-CTF12.</text>
</comment>
<comment type="PTM">
    <text evidence="2">After endoproteolysis, the C-terminal fragment (CTF) is phosphorylated on serine residues by PKA and/or PKC. Phosphorylation on Ser-346 inhibits endoproteolysis.</text>
</comment>
<comment type="similarity">
    <text evidence="9">Belongs to the peptidase A22A family.</text>
</comment>
<dbReference type="EC" id="3.4.23.-"/>
<dbReference type="EMBL" id="Z71333">
    <property type="protein sequence ID" value="CAA95930.1"/>
    <property type="molecule type" value="mRNA"/>
</dbReference>
<dbReference type="PIR" id="JC5080">
    <property type="entry name" value="JC5080"/>
</dbReference>
<dbReference type="PIR" id="JC5081">
    <property type="entry name" value="JC5081"/>
</dbReference>
<dbReference type="RefSeq" id="NP_001296874.1">
    <molecule id="P79802-1"/>
    <property type="nucleotide sequence ID" value="NM_001309945.1"/>
</dbReference>
<dbReference type="SMR" id="P79802"/>
<dbReference type="MEROPS" id="A22.001"/>
<dbReference type="GeneID" id="105858213"/>
<dbReference type="KEGG" id="mmur:105858213"/>
<dbReference type="CTD" id="5663"/>
<dbReference type="OrthoDB" id="20287at2759"/>
<dbReference type="Proteomes" id="UP000694394">
    <property type="component" value="Unplaced"/>
</dbReference>
<dbReference type="GO" id="GO:0016235">
    <property type="term" value="C:aggresome"/>
    <property type="evidence" value="ECO:0000250"/>
    <property type="project" value="UniProtKB"/>
</dbReference>
<dbReference type="GO" id="GO:0031901">
    <property type="term" value="C:early endosome membrane"/>
    <property type="evidence" value="ECO:0007669"/>
    <property type="project" value="UniProtKB-SubCell"/>
</dbReference>
<dbReference type="GO" id="GO:0005783">
    <property type="term" value="C:endoplasmic reticulum"/>
    <property type="evidence" value="ECO:0000250"/>
    <property type="project" value="UniProtKB"/>
</dbReference>
<dbReference type="GO" id="GO:0005789">
    <property type="term" value="C:endoplasmic reticulum membrane"/>
    <property type="evidence" value="ECO:0007669"/>
    <property type="project" value="UniProtKB-SubCell"/>
</dbReference>
<dbReference type="GO" id="GO:0070765">
    <property type="term" value="C:gamma-secretase complex"/>
    <property type="evidence" value="ECO:0000250"/>
    <property type="project" value="UniProtKB"/>
</dbReference>
<dbReference type="GO" id="GO:0005794">
    <property type="term" value="C:Golgi apparatus"/>
    <property type="evidence" value="ECO:0000250"/>
    <property type="project" value="UniProtKB"/>
</dbReference>
<dbReference type="GO" id="GO:0000139">
    <property type="term" value="C:Golgi membrane"/>
    <property type="evidence" value="ECO:0007669"/>
    <property type="project" value="UniProtKB-SubCell"/>
</dbReference>
<dbReference type="GO" id="GO:0030426">
    <property type="term" value="C:growth cone"/>
    <property type="evidence" value="ECO:0000250"/>
    <property type="project" value="UniProtKB"/>
</dbReference>
<dbReference type="GO" id="GO:0016020">
    <property type="term" value="C:membrane"/>
    <property type="evidence" value="ECO:0000250"/>
    <property type="project" value="UniProtKB"/>
</dbReference>
<dbReference type="GO" id="GO:0005739">
    <property type="term" value="C:mitochondrion"/>
    <property type="evidence" value="ECO:0000250"/>
    <property type="project" value="UniProtKB"/>
</dbReference>
<dbReference type="GO" id="GO:0043005">
    <property type="term" value="C:neuron projection"/>
    <property type="evidence" value="ECO:0000250"/>
    <property type="project" value="UniProtKB"/>
</dbReference>
<dbReference type="GO" id="GO:0005886">
    <property type="term" value="C:plasma membrane"/>
    <property type="evidence" value="ECO:0000250"/>
    <property type="project" value="UniProtKB"/>
</dbReference>
<dbReference type="GO" id="GO:0045202">
    <property type="term" value="C:synapse"/>
    <property type="evidence" value="ECO:0007669"/>
    <property type="project" value="UniProtKB-SubCell"/>
</dbReference>
<dbReference type="GO" id="GO:0042500">
    <property type="term" value="F:aspartic endopeptidase activity, intramembrane cleaving"/>
    <property type="evidence" value="ECO:0000250"/>
    <property type="project" value="UniProtKB"/>
</dbReference>
<dbReference type="GO" id="GO:0042982">
    <property type="term" value="P:amyloid precursor protein metabolic process"/>
    <property type="evidence" value="ECO:0000250"/>
    <property type="project" value="UniProtKB"/>
</dbReference>
<dbReference type="GO" id="GO:0034205">
    <property type="term" value="P:amyloid-beta formation"/>
    <property type="evidence" value="ECO:0000250"/>
    <property type="project" value="UniProtKB"/>
</dbReference>
<dbReference type="GO" id="GO:0006915">
    <property type="term" value="P:apoptotic process"/>
    <property type="evidence" value="ECO:0007669"/>
    <property type="project" value="UniProtKB-KW"/>
</dbReference>
<dbReference type="GO" id="GO:0007155">
    <property type="term" value="P:cell adhesion"/>
    <property type="evidence" value="ECO:0007669"/>
    <property type="project" value="UniProtKB-KW"/>
</dbReference>
<dbReference type="GO" id="GO:0032469">
    <property type="term" value="P:endoplasmic reticulum calcium ion homeostasis"/>
    <property type="evidence" value="ECO:0000250"/>
    <property type="project" value="UniProtKB"/>
</dbReference>
<dbReference type="GO" id="GO:0035556">
    <property type="term" value="P:intracellular signal transduction"/>
    <property type="evidence" value="ECO:0007669"/>
    <property type="project" value="InterPro"/>
</dbReference>
<dbReference type="GO" id="GO:0006509">
    <property type="term" value="P:membrane protein ectodomain proteolysis"/>
    <property type="evidence" value="ECO:0000250"/>
    <property type="project" value="UniProtKB"/>
</dbReference>
<dbReference type="GO" id="GO:0007219">
    <property type="term" value="P:Notch signaling pathway"/>
    <property type="evidence" value="ECO:0007669"/>
    <property type="project" value="UniProtKB-KW"/>
</dbReference>
<dbReference type="GO" id="GO:0016485">
    <property type="term" value="P:protein processing"/>
    <property type="evidence" value="ECO:0000250"/>
    <property type="project" value="UniProtKB"/>
</dbReference>
<dbReference type="GO" id="GO:0060828">
    <property type="term" value="P:regulation of canonical Wnt signaling pathway"/>
    <property type="evidence" value="ECO:0000250"/>
    <property type="project" value="UniProtKB"/>
</dbReference>
<dbReference type="GO" id="GO:0010975">
    <property type="term" value="P:regulation of neuron projection development"/>
    <property type="evidence" value="ECO:0000250"/>
    <property type="project" value="UniProtKB"/>
</dbReference>
<dbReference type="FunFam" id="1.10.472.100:FF:000001">
    <property type="entry name" value="Presenilin"/>
    <property type="match status" value="1"/>
</dbReference>
<dbReference type="Gene3D" id="1.10.472.100">
    <property type="entry name" value="Presenilin"/>
    <property type="match status" value="1"/>
</dbReference>
<dbReference type="InterPro" id="IPR002031">
    <property type="entry name" value="Pept_A22A_PS1"/>
</dbReference>
<dbReference type="InterPro" id="IPR001108">
    <property type="entry name" value="Peptidase_A22A"/>
</dbReference>
<dbReference type="InterPro" id="IPR006639">
    <property type="entry name" value="Preselin/SPP"/>
</dbReference>
<dbReference type="InterPro" id="IPR042524">
    <property type="entry name" value="Presenilin_C"/>
</dbReference>
<dbReference type="PANTHER" id="PTHR10202">
    <property type="entry name" value="PRESENILIN"/>
    <property type="match status" value="1"/>
</dbReference>
<dbReference type="PANTHER" id="PTHR10202:SF18">
    <property type="entry name" value="PRESENILIN-1"/>
    <property type="match status" value="1"/>
</dbReference>
<dbReference type="Pfam" id="PF01080">
    <property type="entry name" value="Presenilin"/>
    <property type="match status" value="1"/>
</dbReference>
<dbReference type="PRINTS" id="PR01072">
    <property type="entry name" value="PRESENILIN"/>
</dbReference>
<dbReference type="PRINTS" id="PR01073">
    <property type="entry name" value="PRESENILIN1"/>
</dbReference>
<dbReference type="SMART" id="SM00730">
    <property type="entry name" value="PSN"/>
    <property type="match status" value="1"/>
</dbReference>
<organism>
    <name type="scientific">Microcebus murinus</name>
    <name type="common">Gray mouse lemur</name>
    <name type="synonym">Lemur murinus</name>
    <dbReference type="NCBI Taxonomy" id="30608"/>
    <lineage>
        <taxon>Eukaryota</taxon>
        <taxon>Metazoa</taxon>
        <taxon>Chordata</taxon>
        <taxon>Craniata</taxon>
        <taxon>Vertebrata</taxon>
        <taxon>Euteleostomi</taxon>
        <taxon>Mammalia</taxon>
        <taxon>Eutheria</taxon>
        <taxon>Euarchontoglires</taxon>
        <taxon>Primates</taxon>
        <taxon>Strepsirrhini</taxon>
        <taxon>Lemuriformes</taxon>
        <taxon>Cheirogaleidae</taxon>
        <taxon>Microcebus</taxon>
    </lineage>
</organism>
<protein>
    <recommendedName>
        <fullName>Presenilin-1</fullName>
        <shortName>PS-1</shortName>
        <ecNumber>3.4.23.-</ecNumber>
    </recommendedName>
    <component>
        <recommendedName>
            <fullName>Presenilin-1 NTF subunit</fullName>
        </recommendedName>
    </component>
    <component>
        <recommendedName>
            <fullName>Presenilin-1 CTF subunit</fullName>
        </recommendedName>
    </component>
    <component>
        <recommendedName>
            <fullName>Presenilin-1 CTF12</fullName>
            <shortName>PS1-CTF12</shortName>
        </recommendedName>
    </component>
</protein>
<proteinExistence type="evidence at transcript level"/>